<keyword id="KW-0240">DNA-directed RNA polymerase</keyword>
<keyword id="KW-0548">Nucleotidyltransferase</keyword>
<keyword id="KW-1185">Reference proteome</keyword>
<keyword id="KW-0804">Transcription</keyword>
<keyword id="KW-0808">Transferase</keyword>
<dbReference type="EC" id="2.7.7.6" evidence="1"/>
<dbReference type="EMBL" id="CP001089">
    <property type="protein sequence ID" value="ACD95060.1"/>
    <property type="molecule type" value="Genomic_DNA"/>
</dbReference>
<dbReference type="RefSeq" id="WP_012469406.1">
    <property type="nucleotide sequence ID" value="NC_010814.1"/>
</dbReference>
<dbReference type="SMR" id="B3E7S8"/>
<dbReference type="STRING" id="398767.Glov_1339"/>
<dbReference type="KEGG" id="glo:Glov_1339"/>
<dbReference type="eggNOG" id="COG0085">
    <property type="taxonomic scope" value="Bacteria"/>
</dbReference>
<dbReference type="HOGENOM" id="CLU_000524_4_1_7"/>
<dbReference type="OrthoDB" id="9803954at2"/>
<dbReference type="Proteomes" id="UP000002420">
    <property type="component" value="Chromosome"/>
</dbReference>
<dbReference type="GO" id="GO:0000428">
    <property type="term" value="C:DNA-directed RNA polymerase complex"/>
    <property type="evidence" value="ECO:0007669"/>
    <property type="project" value="UniProtKB-KW"/>
</dbReference>
<dbReference type="GO" id="GO:0003677">
    <property type="term" value="F:DNA binding"/>
    <property type="evidence" value="ECO:0007669"/>
    <property type="project" value="UniProtKB-UniRule"/>
</dbReference>
<dbReference type="GO" id="GO:0003899">
    <property type="term" value="F:DNA-directed RNA polymerase activity"/>
    <property type="evidence" value="ECO:0007669"/>
    <property type="project" value="UniProtKB-UniRule"/>
</dbReference>
<dbReference type="GO" id="GO:0032549">
    <property type="term" value="F:ribonucleoside binding"/>
    <property type="evidence" value="ECO:0007669"/>
    <property type="project" value="InterPro"/>
</dbReference>
<dbReference type="GO" id="GO:0006351">
    <property type="term" value="P:DNA-templated transcription"/>
    <property type="evidence" value="ECO:0007669"/>
    <property type="project" value="UniProtKB-UniRule"/>
</dbReference>
<dbReference type="CDD" id="cd00653">
    <property type="entry name" value="RNA_pol_B_RPB2"/>
    <property type="match status" value="1"/>
</dbReference>
<dbReference type="FunFam" id="2.40.50.100:FF:000006">
    <property type="entry name" value="DNA-directed RNA polymerase subunit beta"/>
    <property type="match status" value="1"/>
</dbReference>
<dbReference type="FunFam" id="3.90.1800.10:FF:000001">
    <property type="entry name" value="DNA-directed RNA polymerase subunit beta"/>
    <property type="match status" value="1"/>
</dbReference>
<dbReference type="Gene3D" id="2.40.50.100">
    <property type="match status" value="1"/>
</dbReference>
<dbReference type="Gene3D" id="2.40.50.150">
    <property type="match status" value="1"/>
</dbReference>
<dbReference type="Gene3D" id="3.90.1100.10">
    <property type="match status" value="2"/>
</dbReference>
<dbReference type="Gene3D" id="2.30.150.10">
    <property type="entry name" value="DNA-directed RNA polymerase, beta subunit, external 1 domain"/>
    <property type="match status" value="1"/>
</dbReference>
<dbReference type="Gene3D" id="2.40.270.10">
    <property type="entry name" value="DNA-directed RNA polymerase, subunit 2, domain 6"/>
    <property type="match status" value="1"/>
</dbReference>
<dbReference type="Gene3D" id="3.90.1800.10">
    <property type="entry name" value="RNA polymerase alpha subunit dimerisation domain"/>
    <property type="match status" value="1"/>
</dbReference>
<dbReference type="Gene3D" id="3.90.1110.10">
    <property type="entry name" value="RNA polymerase Rpb2, domain 2"/>
    <property type="match status" value="1"/>
</dbReference>
<dbReference type="HAMAP" id="MF_01321">
    <property type="entry name" value="RNApol_bact_RpoB"/>
    <property type="match status" value="1"/>
</dbReference>
<dbReference type="InterPro" id="IPR042107">
    <property type="entry name" value="DNA-dir_RNA_pol_bsu_ext_1_sf"/>
</dbReference>
<dbReference type="InterPro" id="IPR019462">
    <property type="entry name" value="DNA-dir_RNA_pol_bsu_external_1"/>
</dbReference>
<dbReference type="InterPro" id="IPR015712">
    <property type="entry name" value="DNA-dir_RNA_pol_su2"/>
</dbReference>
<dbReference type="InterPro" id="IPR007120">
    <property type="entry name" value="DNA-dir_RNAP_su2_dom"/>
</dbReference>
<dbReference type="InterPro" id="IPR037033">
    <property type="entry name" value="DNA-dir_RNAP_su2_hyb_sf"/>
</dbReference>
<dbReference type="InterPro" id="IPR010243">
    <property type="entry name" value="RNA_pol_bsu_bac"/>
</dbReference>
<dbReference type="InterPro" id="IPR007121">
    <property type="entry name" value="RNA_pol_bsu_CS"/>
</dbReference>
<dbReference type="InterPro" id="IPR007644">
    <property type="entry name" value="RNA_pol_bsu_protrusion"/>
</dbReference>
<dbReference type="InterPro" id="IPR007642">
    <property type="entry name" value="RNA_pol_Rpb2_2"/>
</dbReference>
<dbReference type="InterPro" id="IPR037034">
    <property type="entry name" value="RNA_pol_Rpb2_2_sf"/>
</dbReference>
<dbReference type="InterPro" id="IPR007645">
    <property type="entry name" value="RNA_pol_Rpb2_3"/>
</dbReference>
<dbReference type="InterPro" id="IPR007641">
    <property type="entry name" value="RNA_pol_Rpb2_7"/>
</dbReference>
<dbReference type="InterPro" id="IPR014724">
    <property type="entry name" value="RNA_pol_RPB2_OB-fold"/>
</dbReference>
<dbReference type="NCBIfam" id="NF001616">
    <property type="entry name" value="PRK00405.1"/>
    <property type="match status" value="1"/>
</dbReference>
<dbReference type="NCBIfam" id="TIGR02013">
    <property type="entry name" value="rpoB"/>
    <property type="match status" value="1"/>
</dbReference>
<dbReference type="PANTHER" id="PTHR20856">
    <property type="entry name" value="DNA-DIRECTED RNA POLYMERASE I SUBUNIT 2"/>
    <property type="match status" value="1"/>
</dbReference>
<dbReference type="Pfam" id="PF04563">
    <property type="entry name" value="RNA_pol_Rpb2_1"/>
    <property type="match status" value="1"/>
</dbReference>
<dbReference type="Pfam" id="PF04561">
    <property type="entry name" value="RNA_pol_Rpb2_2"/>
    <property type="match status" value="2"/>
</dbReference>
<dbReference type="Pfam" id="PF04565">
    <property type="entry name" value="RNA_pol_Rpb2_3"/>
    <property type="match status" value="1"/>
</dbReference>
<dbReference type="Pfam" id="PF10385">
    <property type="entry name" value="RNA_pol_Rpb2_45"/>
    <property type="match status" value="1"/>
</dbReference>
<dbReference type="Pfam" id="PF00562">
    <property type="entry name" value="RNA_pol_Rpb2_6"/>
    <property type="match status" value="1"/>
</dbReference>
<dbReference type="Pfam" id="PF04560">
    <property type="entry name" value="RNA_pol_Rpb2_7"/>
    <property type="match status" value="1"/>
</dbReference>
<dbReference type="SUPFAM" id="SSF64484">
    <property type="entry name" value="beta and beta-prime subunits of DNA dependent RNA-polymerase"/>
    <property type="match status" value="1"/>
</dbReference>
<dbReference type="PROSITE" id="PS01166">
    <property type="entry name" value="RNA_POL_BETA"/>
    <property type="match status" value="1"/>
</dbReference>
<comment type="function">
    <text evidence="1">DNA-dependent RNA polymerase catalyzes the transcription of DNA into RNA using the four ribonucleoside triphosphates as substrates.</text>
</comment>
<comment type="catalytic activity">
    <reaction evidence="1">
        <text>RNA(n) + a ribonucleoside 5'-triphosphate = RNA(n+1) + diphosphate</text>
        <dbReference type="Rhea" id="RHEA:21248"/>
        <dbReference type="Rhea" id="RHEA-COMP:14527"/>
        <dbReference type="Rhea" id="RHEA-COMP:17342"/>
        <dbReference type="ChEBI" id="CHEBI:33019"/>
        <dbReference type="ChEBI" id="CHEBI:61557"/>
        <dbReference type="ChEBI" id="CHEBI:140395"/>
        <dbReference type="EC" id="2.7.7.6"/>
    </reaction>
</comment>
<comment type="subunit">
    <text evidence="1">The RNAP catalytic core consists of 2 alpha, 1 beta, 1 beta' and 1 omega subunit. When a sigma factor is associated with the core the holoenzyme is formed, which can initiate transcription.</text>
</comment>
<comment type="similarity">
    <text evidence="1">Belongs to the RNA polymerase beta chain family.</text>
</comment>
<reference key="1">
    <citation type="submission" date="2008-05" db="EMBL/GenBank/DDBJ databases">
        <title>Complete sequence of chromosome of Geobacter lovleyi SZ.</title>
        <authorList>
            <consortium name="US DOE Joint Genome Institute"/>
            <person name="Lucas S."/>
            <person name="Copeland A."/>
            <person name="Lapidus A."/>
            <person name="Glavina del Rio T."/>
            <person name="Dalin E."/>
            <person name="Tice H."/>
            <person name="Bruce D."/>
            <person name="Goodwin L."/>
            <person name="Pitluck S."/>
            <person name="Chertkov O."/>
            <person name="Meincke L."/>
            <person name="Brettin T."/>
            <person name="Detter J.C."/>
            <person name="Han C."/>
            <person name="Tapia R."/>
            <person name="Kuske C.R."/>
            <person name="Schmutz J."/>
            <person name="Larimer F."/>
            <person name="Land M."/>
            <person name="Hauser L."/>
            <person name="Kyrpides N."/>
            <person name="Mikhailova N."/>
            <person name="Sung Y."/>
            <person name="Fletcher K.E."/>
            <person name="Ritalahti K.M."/>
            <person name="Loeffler F.E."/>
            <person name="Richardson P."/>
        </authorList>
    </citation>
    <scope>NUCLEOTIDE SEQUENCE [LARGE SCALE GENOMIC DNA]</scope>
    <source>
        <strain>ATCC BAA-1151 / DSM 17278 / SZ</strain>
    </source>
</reference>
<proteinExistence type="inferred from homology"/>
<protein>
    <recommendedName>
        <fullName evidence="1">DNA-directed RNA polymerase subunit beta</fullName>
        <shortName evidence="1">RNAP subunit beta</shortName>
        <ecNumber evidence="1">2.7.7.6</ecNumber>
    </recommendedName>
    <alternativeName>
        <fullName evidence="1">RNA polymerase subunit beta</fullName>
    </alternativeName>
    <alternativeName>
        <fullName evidence="1">Transcriptase subunit beta</fullName>
    </alternativeName>
</protein>
<evidence type="ECO:0000255" key="1">
    <source>
        <dbReference type="HAMAP-Rule" id="MF_01321"/>
    </source>
</evidence>
<accession>B3E7S8</accession>
<organism>
    <name type="scientific">Trichlorobacter lovleyi (strain ATCC BAA-1151 / DSM 17278 / SZ)</name>
    <name type="common">Geobacter lovleyi</name>
    <dbReference type="NCBI Taxonomy" id="398767"/>
    <lineage>
        <taxon>Bacteria</taxon>
        <taxon>Pseudomonadati</taxon>
        <taxon>Thermodesulfobacteriota</taxon>
        <taxon>Desulfuromonadia</taxon>
        <taxon>Geobacterales</taxon>
        <taxon>Geobacteraceae</taxon>
        <taxon>Trichlorobacter</taxon>
    </lineage>
</organism>
<sequence>MAYSIANNHLLRKNFATIKNIIDIPNLIDIQKNSYRRFLQSDVPLDLRKNIGLEAVFRSVFPIKDFSETSSLEYVSYTLSKPKYDVEECHQRGMTYAAPMKVKVRLVIWDSGKESGVRGVKDIKEQEVYFGEIPLMTENGTFIINGTERVIVSQLHRSPGVFFDHDKGKTHSSGKVLYSARVIPYRGSWLDFEFDHKDILFVRIDRRRKMPATVLLKALGYSVEHLLNYYYKSEQIYIAAGELRKGIEPELLTMQKAVVDVADANGEVIVKANRKFTKASIKKLLDHGVTSIPTSSESIIGRYASADVVDPVTGEILLECNQELTADKLDELRQKEVTTFNLLYIDGLNVTSSFRDTLLADKISSSDEALIEIYRRLRPGDPPTLKSSLALFDNLFFNPERYDLSAVGRLKLNFKLGLKVWPDCTILNGPTMLTAAELQNAEQLIGSLLNGTRPVDLALKDRLSSDLTKSLKKLDLKQPVPERLLEQLADELNSAVANAEFFQRDLIAGLELPESFIKLMDLIEQGGYDENRRRIEGLRRNRMLLEVAYGDSVECCNRNDILEIVRYLIELKNGRGAIDDIDHLGNRRVRAVGELLENQYRIGLVRMERAIKERMSLQEVENLMPHDLINSKPVSAVVKEFFGSSQLSQFMDQTNPLSEVTHKRRLSALGPGGLTRERAGFEVRDVHPTHYGRVCPIETPEGPNIGLIASLSTYARINEHGFVETPYRLVREGQVTSEVKFFSALEEEGHAIAQANALVDQDGRFINEYVSARKSGEFVLVQRDEIELMDVAPKQLVSVAAALIPFLENDDANRALMGSNMQRQAVPLLRADSPLVGTGMERIVAKDSGVSVIARHNGVVDAVDAGRIVIKIDEEEYDETGTGVDIYNLVKFSRSNQNTCINQKPVVKVGDKVKRGDVIADGPSTDMGELALGQNIIVAFMPWGGYNFEDSILVSERLTKDDRYTSIHIEEFECVARDTKLGKEEITADIPNLGEEALKDLDESGIIRIGAEVKPGDILVGKITPKGETQLSPEEKLLRAIFGEKAGDVRDTSLTIPPGVEGTVIGAKVFSRKGNDKDARTELIEKIEEEKLRKDEQDEVRIIRDSARGKLKRLLVGKTAGAKIEDRHGVTVLAKGKKITDELLESLTMDRWATISVSDGTDVEEKVAEVLSKLNEQVELIRGVFDDKVQKLRRGDDLPPGVIKMVKVYVAIKRKLQVGDKMAGRHGNKGVVSRILPEEDMPYMDDGRPVEIVLNPLGVPSRMNVGQILETHLGWAAKGLGWKIQKMLEEHTSEENLKKFIRETYDNADFNKILDTMDREELLLVARRLSRGVPMASPVFEGAGEAKIKELLTRAGFATNGQVTLFDGRTGEPFKHKVTVGIMYVLKLHHLVDDKIHARSIGPYSLVTQQPLGGKAQFGGQRLGEMEVWAMEAYGCSYALQEFLTVKSDDVSGRTRMYEAIVKGKHTLEPGLPESFNVLIKELQSLCLDVELLEGDE</sequence>
<feature type="chain" id="PRO_1000141700" description="DNA-directed RNA polymerase subunit beta">
    <location>
        <begin position="1"/>
        <end position="1497"/>
    </location>
</feature>
<gene>
    <name evidence="1" type="primary">rpoB</name>
    <name type="ordered locus">Glov_1339</name>
</gene>
<name>RPOB_TRIL1</name>